<protein>
    <recommendedName>
        <fullName evidence="1">Flagellar P-ring protein</fullName>
    </recommendedName>
    <alternativeName>
        <fullName evidence="1">Basal body P-ring protein</fullName>
    </alternativeName>
</protein>
<evidence type="ECO:0000255" key="1">
    <source>
        <dbReference type="HAMAP-Rule" id="MF_00416"/>
    </source>
</evidence>
<accession>Q7MMV0</accession>
<reference key="1">
    <citation type="journal article" date="2003" name="Genome Res.">
        <title>Comparative genome analysis of Vibrio vulnificus, a marine pathogen.</title>
        <authorList>
            <person name="Chen C.-Y."/>
            <person name="Wu K.-M."/>
            <person name="Chang Y.-C."/>
            <person name="Chang C.-H."/>
            <person name="Tsai H.-C."/>
            <person name="Liao T.-L."/>
            <person name="Liu Y.-M."/>
            <person name="Chen H.-J."/>
            <person name="Shen A.B.-T."/>
            <person name="Li J.-C."/>
            <person name="Su T.-L."/>
            <person name="Shao C.-P."/>
            <person name="Lee C.-T."/>
            <person name="Hor L.-I."/>
            <person name="Tsai S.-F."/>
        </authorList>
    </citation>
    <scope>NUCLEOTIDE SEQUENCE [LARGE SCALE GENOMIC DNA]</scope>
    <source>
        <strain>YJ016</strain>
    </source>
</reference>
<gene>
    <name evidence="1" type="primary">flgI</name>
    <name type="ordered locus">VV0967</name>
</gene>
<feature type="signal peptide" evidence="1">
    <location>
        <begin position="1"/>
        <end position="20"/>
    </location>
</feature>
<feature type="chain" id="PRO_0000009529" description="Flagellar P-ring protein">
    <location>
        <begin position="21"/>
        <end position="363"/>
    </location>
</feature>
<sequence length="363" mass="37921">MKKFTLLLLCFVLPMTSAYAARIKDVAQVAGVRSNQLVGYGLVSGLPGTGESTPFTEQSFAAMLQNFGIQLPAGTKPKIKNVAAVMVTAELPPFSKPGQQIDVTVSSIGSAKSLRGGTLLQTFLKGLDGQVYAVAQGNLVVSGFSAEGADGSKIVGNNPTVGIISSGAMVEREVPTPFGRGDFITFNLLESDFTTAQRMADAVNNFLGPQMASAVDATSVRVRAPRDISQRVAFLSAIENLEFDPADGAAKIIVNSRTGTIVVGKHVRLKPAAVTHGGMTVAIKENLSVSQPNGFSGGETVVVPNSDISVTEEQGKMFKFEPGLTLDDLVRAVNQVGAAPSDLMAILQALKQAGAIEGQLIII</sequence>
<comment type="function">
    <text evidence="1">Assembles around the rod to form the L-ring and probably protects the motor/basal body from shearing forces during rotation.</text>
</comment>
<comment type="subunit">
    <text evidence="1">The basal body constitutes a major portion of the flagellar organelle and consists of four rings (L,P,S, and M) mounted on a central rod.</text>
</comment>
<comment type="subcellular location">
    <subcellularLocation>
        <location evidence="1">Periplasm</location>
    </subcellularLocation>
    <subcellularLocation>
        <location evidence="1">Bacterial flagellum basal body</location>
    </subcellularLocation>
</comment>
<comment type="similarity">
    <text evidence="1">Belongs to the FlgI family.</text>
</comment>
<name>FLGI_VIBVY</name>
<keyword id="KW-0975">Bacterial flagellum</keyword>
<keyword id="KW-0574">Periplasm</keyword>
<keyword id="KW-0732">Signal</keyword>
<organism>
    <name type="scientific">Vibrio vulnificus (strain YJ016)</name>
    <dbReference type="NCBI Taxonomy" id="196600"/>
    <lineage>
        <taxon>Bacteria</taxon>
        <taxon>Pseudomonadati</taxon>
        <taxon>Pseudomonadota</taxon>
        <taxon>Gammaproteobacteria</taxon>
        <taxon>Vibrionales</taxon>
        <taxon>Vibrionaceae</taxon>
        <taxon>Vibrio</taxon>
    </lineage>
</organism>
<proteinExistence type="inferred from homology"/>
<dbReference type="EMBL" id="BA000037">
    <property type="protein sequence ID" value="BAC93731.1"/>
    <property type="molecule type" value="Genomic_DNA"/>
</dbReference>
<dbReference type="RefSeq" id="WP_011078334.1">
    <property type="nucleotide sequence ID" value="NC_005139.1"/>
</dbReference>
<dbReference type="SMR" id="Q7MMV0"/>
<dbReference type="STRING" id="672.VV93_v1c08950"/>
<dbReference type="KEGG" id="vvy:VV0967"/>
<dbReference type="eggNOG" id="COG1706">
    <property type="taxonomic scope" value="Bacteria"/>
</dbReference>
<dbReference type="HOGENOM" id="CLU_045235_1_0_6"/>
<dbReference type="Proteomes" id="UP000002675">
    <property type="component" value="Chromosome I"/>
</dbReference>
<dbReference type="GO" id="GO:0009428">
    <property type="term" value="C:bacterial-type flagellum basal body, distal rod, P ring"/>
    <property type="evidence" value="ECO:0007669"/>
    <property type="project" value="InterPro"/>
</dbReference>
<dbReference type="GO" id="GO:0030288">
    <property type="term" value="C:outer membrane-bounded periplasmic space"/>
    <property type="evidence" value="ECO:0007669"/>
    <property type="project" value="InterPro"/>
</dbReference>
<dbReference type="GO" id="GO:0005198">
    <property type="term" value="F:structural molecule activity"/>
    <property type="evidence" value="ECO:0007669"/>
    <property type="project" value="InterPro"/>
</dbReference>
<dbReference type="GO" id="GO:0071973">
    <property type="term" value="P:bacterial-type flagellum-dependent cell motility"/>
    <property type="evidence" value="ECO:0007669"/>
    <property type="project" value="InterPro"/>
</dbReference>
<dbReference type="HAMAP" id="MF_00416">
    <property type="entry name" value="FlgI"/>
    <property type="match status" value="1"/>
</dbReference>
<dbReference type="InterPro" id="IPR001782">
    <property type="entry name" value="Flag_FlgI"/>
</dbReference>
<dbReference type="NCBIfam" id="NF003676">
    <property type="entry name" value="PRK05303.1"/>
    <property type="match status" value="1"/>
</dbReference>
<dbReference type="PANTHER" id="PTHR30381">
    <property type="entry name" value="FLAGELLAR P-RING PERIPLASMIC PROTEIN FLGI"/>
    <property type="match status" value="1"/>
</dbReference>
<dbReference type="PANTHER" id="PTHR30381:SF0">
    <property type="entry name" value="FLAGELLAR P-RING PROTEIN"/>
    <property type="match status" value="1"/>
</dbReference>
<dbReference type="Pfam" id="PF02119">
    <property type="entry name" value="FlgI"/>
    <property type="match status" value="1"/>
</dbReference>
<dbReference type="PRINTS" id="PR01010">
    <property type="entry name" value="FLGPRINGFLGI"/>
</dbReference>